<organism>
    <name type="scientific">Thermotoga maritima (strain ATCC 43589 / DSM 3109 / JCM 10099 / NBRC 100826 / MSB8)</name>
    <dbReference type="NCBI Taxonomy" id="243274"/>
    <lineage>
        <taxon>Bacteria</taxon>
        <taxon>Thermotogati</taxon>
        <taxon>Thermotogota</taxon>
        <taxon>Thermotogae</taxon>
        <taxon>Thermotogales</taxon>
        <taxon>Thermotogaceae</taxon>
        <taxon>Thermotoga</taxon>
    </lineage>
</organism>
<accession>Q9WXS4</accession>
<feature type="chain" id="PRO_0000170689" description="Mannonate dehydratase">
    <location>
        <begin position="1"/>
        <end position="360"/>
    </location>
</feature>
<reference key="1">
    <citation type="journal article" date="1999" name="Nature">
        <title>Evidence for lateral gene transfer between Archaea and Bacteria from genome sequence of Thermotoga maritima.</title>
        <authorList>
            <person name="Nelson K.E."/>
            <person name="Clayton R.A."/>
            <person name="Gill S.R."/>
            <person name="Gwinn M.L."/>
            <person name="Dodson R.J."/>
            <person name="Haft D.H."/>
            <person name="Hickey E.K."/>
            <person name="Peterson J.D."/>
            <person name="Nelson W.C."/>
            <person name="Ketchum K.A."/>
            <person name="McDonald L.A."/>
            <person name="Utterback T.R."/>
            <person name="Malek J.A."/>
            <person name="Linher K.D."/>
            <person name="Garrett M.M."/>
            <person name="Stewart A.M."/>
            <person name="Cotton M.D."/>
            <person name="Pratt M.S."/>
            <person name="Phillips C.A."/>
            <person name="Richardson D.L."/>
            <person name="Heidelberg J.F."/>
            <person name="Sutton G.G."/>
            <person name="Fleischmann R.D."/>
            <person name="Eisen J.A."/>
            <person name="White O."/>
            <person name="Salzberg S.L."/>
            <person name="Smith H.O."/>
            <person name="Venter J.C."/>
            <person name="Fraser C.M."/>
        </authorList>
    </citation>
    <scope>NUCLEOTIDE SEQUENCE [LARGE SCALE GENOMIC DNA]</scope>
    <source>
        <strain>ATCC 43589 / DSM 3109 / JCM 10099 / NBRC 100826 / MSB8</strain>
    </source>
</reference>
<name>UXUA_THEMA</name>
<keyword id="KW-0408">Iron</keyword>
<keyword id="KW-0456">Lyase</keyword>
<keyword id="KW-0464">Manganese</keyword>
<keyword id="KW-1185">Reference proteome</keyword>
<dbReference type="EC" id="4.2.1.8"/>
<dbReference type="EMBL" id="AE000512">
    <property type="protein sequence ID" value="AAD35163.1"/>
    <property type="molecule type" value="Genomic_DNA"/>
</dbReference>
<dbReference type="PIR" id="A72423">
    <property type="entry name" value="A72423"/>
</dbReference>
<dbReference type="RefSeq" id="NP_227885.1">
    <property type="nucleotide sequence ID" value="NC_000853.1"/>
</dbReference>
<dbReference type="RefSeq" id="WP_004082566.1">
    <property type="nucleotide sequence ID" value="NZ_CP011107.1"/>
</dbReference>
<dbReference type="SMR" id="Q9WXS4"/>
<dbReference type="FunCoup" id="Q9WXS4">
    <property type="interactions" value="38"/>
</dbReference>
<dbReference type="STRING" id="243274.TM_0069"/>
<dbReference type="PaxDb" id="243274-THEMA_04460"/>
<dbReference type="EnsemblBacteria" id="AAD35163">
    <property type="protein sequence ID" value="AAD35163"/>
    <property type="gene ID" value="TM_0069"/>
</dbReference>
<dbReference type="KEGG" id="tma:TM0069"/>
<dbReference type="KEGG" id="tmi:THEMA_04460"/>
<dbReference type="KEGG" id="tmm:Tmari_0066"/>
<dbReference type="KEGG" id="tmw:THMA_0065"/>
<dbReference type="eggNOG" id="COG1312">
    <property type="taxonomic scope" value="Bacteria"/>
</dbReference>
<dbReference type="InParanoid" id="Q9WXS4"/>
<dbReference type="OrthoDB" id="9780250at2"/>
<dbReference type="BioCyc" id="MetaCyc:MONOMER-17955"/>
<dbReference type="UniPathway" id="UPA00246"/>
<dbReference type="Proteomes" id="UP000008183">
    <property type="component" value="Chromosome"/>
</dbReference>
<dbReference type="GO" id="GO:0008198">
    <property type="term" value="F:ferrous iron binding"/>
    <property type="evidence" value="ECO:0000318"/>
    <property type="project" value="GO_Central"/>
</dbReference>
<dbReference type="GO" id="GO:0030145">
    <property type="term" value="F:manganese ion binding"/>
    <property type="evidence" value="ECO:0000318"/>
    <property type="project" value="GO_Central"/>
</dbReference>
<dbReference type="GO" id="GO:0008927">
    <property type="term" value="F:mannonate dehydratase activity"/>
    <property type="evidence" value="ECO:0000318"/>
    <property type="project" value="GO_Central"/>
</dbReference>
<dbReference type="GO" id="GO:0042840">
    <property type="term" value="P:D-glucuronate catabolic process"/>
    <property type="evidence" value="ECO:0000318"/>
    <property type="project" value="GO_Central"/>
</dbReference>
<dbReference type="Gene3D" id="3.20.20.150">
    <property type="entry name" value="Divalent-metal-dependent TIM barrel enzymes"/>
    <property type="match status" value="1"/>
</dbReference>
<dbReference type="HAMAP" id="MF_00106">
    <property type="entry name" value="UxuA"/>
    <property type="match status" value="1"/>
</dbReference>
<dbReference type="InterPro" id="IPR004628">
    <property type="entry name" value="Man_deHydtase"/>
</dbReference>
<dbReference type="InterPro" id="IPR036237">
    <property type="entry name" value="Xyl_isomerase-like_sf"/>
</dbReference>
<dbReference type="NCBIfam" id="NF003027">
    <property type="entry name" value="PRK03906.1"/>
    <property type="match status" value="1"/>
</dbReference>
<dbReference type="NCBIfam" id="TIGR00695">
    <property type="entry name" value="uxuA"/>
    <property type="match status" value="1"/>
</dbReference>
<dbReference type="PANTHER" id="PTHR30387">
    <property type="entry name" value="MANNONATE DEHYDRATASE"/>
    <property type="match status" value="1"/>
</dbReference>
<dbReference type="PANTHER" id="PTHR30387:SF2">
    <property type="entry name" value="MANNONATE DEHYDRATASE"/>
    <property type="match status" value="1"/>
</dbReference>
<dbReference type="Pfam" id="PF03786">
    <property type="entry name" value="UxuA"/>
    <property type="match status" value="1"/>
</dbReference>
<dbReference type="PIRSF" id="PIRSF016049">
    <property type="entry name" value="Man_dehyd"/>
    <property type="match status" value="1"/>
</dbReference>
<dbReference type="SUPFAM" id="SSF51658">
    <property type="entry name" value="Xylose isomerase-like"/>
    <property type="match status" value="1"/>
</dbReference>
<gene>
    <name type="primary">uxuA</name>
    <name type="ordered locus">TM_0069</name>
</gene>
<evidence type="ECO:0000250" key="1"/>
<evidence type="ECO:0000305" key="2"/>
<protein>
    <recommendedName>
        <fullName>Mannonate dehydratase</fullName>
        <ecNumber>4.2.1.8</ecNumber>
    </recommendedName>
    <alternativeName>
        <fullName>D-mannonate hydro-lyase</fullName>
    </alternativeName>
</protein>
<sequence length="360" mass="41890">MKLVFRWYGEKHDTVTLEQIRQIPGVEGVVGALFDIPVGEVWPFEEIMKLKETVEKAGLKLEVIESVNVHEDIKLGLPTRDRYIENYKKTIRNLAKAGVKVVCYNFMPVFDWMRTDLHKKLPDGSETMEYDHRLIEGVTPDELIKRVKEGSQGFVLPGWEWDRLEKLRETFELYKNVDEEKLFENLVYFLERVIPVCEECDVKLAIHPDDPPWSIFGLPRIITNKENIERMLKAVDSPYNGITFCMGSLGANPENNIPEMIRYFGKMGRIHFAHVRNLKFTGEKSFYETAHPSFCGSHDLFEVMKAFHDIGYEGYIRPDHGRLIWGEKARPGYGLYDRALGATYILGLWEAIDKMKKRYC</sequence>
<proteinExistence type="inferred from homology"/>
<comment type="function">
    <text evidence="1">Catalyzes the dehydration of D-mannonate.</text>
</comment>
<comment type="catalytic activity">
    <reaction>
        <text>D-mannonate = 2-dehydro-3-deoxy-D-gluconate + H2O</text>
        <dbReference type="Rhea" id="RHEA:20097"/>
        <dbReference type="ChEBI" id="CHEBI:15377"/>
        <dbReference type="ChEBI" id="CHEBI:17767"/>
        <dbReference type="ChEBI" id="CHEBI:57990"/>
        <dbReference type="EC" id="4.2.1.8"/>
    </reaction>
</comment>
<comment type="cofactor">
    <cofactor evidence="1">
        <name>Fe(2+)</name>
        <dbReference type="ChEBI" id="CHEBI:29033"/>
    </cofactor>
    <cofactor evidence="1">
        <name>Mn(2+)</name>
        <dbReference type="ChEBI" id="CHEBI:29035"/>
    </cofactor>
</comment>
<comment type="pathway">
    <text>Carbohydrate metabolism; pentose and glucuronate interconversion.</text>
</comment>
<comment type="similarity">
    <text evidence="2">Belongs to the mannonate dehydratase family.</text>
</comment>